<dbReference type="EMBL" id="AE017199">
    <property type="protein sequence ID" value="AAR39100.1"/>
    <property type="molecule type" value="Genomic_DNA"/>
</dbReference>
<dbReference type="SMR" id="Q74NF7"/>
<dbReference type="STRING" id="228908.NEQ247"/>
<dbReference type="EnsemblBacteria" id="AAR39100">
    <property type="protein sequence ID" value="AAR39100"/>
    <property type="gene ID" value="NEQ247"/>
</dbReference>
<dbReference type="KEGG" id="neq:NEQ247"/>
<dbReference type="PATRIC" id="fig|228908.8.peg.252"/>
<dbReference type="HOGENOM" id="CLU_089738_1_1_2"/>
<dbReference type="Proteomes" id="UP000000578">
    <property type="component" value="Chromosome"/>
</dbReference>
<dbReference type="GO" id="GO:0015935">
    <property type="term" value="C:small ribosomal subunit"/>
    <property type="evidence" value="ECO:0007669"/>
    <property type="project" value="InterPro"/>
</dbReference>
<dbReference type="GO" id="GO:0019843">
    <property type="term" value="F:rRNA binding"/>
    <property type="evidence" value="ECO:0007669"/>
    <property type="project" value="UniProtKB-UniRule"/>
</dbReference>
<dbReference type="GO" id="GO:0003735">
    <property type="term" value="F:structural constituent of ribosome"/>
    <property type="evidence" value="ECO:0007669"/>
    <property type="project" value="InterPro"/>
</dbReference>
<dbReference type="GO" id="GO:0042274">
    <property type="term" value="P:ribosomal small subunit biogenesis"/>
    <property type="evidence" value="ECO:0007669"/>
    <property type="project" value="TreeGrafter"/>
</dbReference>
<dbReference type="GO" id="GO:0006412">
    <property type="term" value="P:translation"/>
    <property type="evidence" value="ECO:0007669"/>
    <property type="project" value="UniProtKB-UniRule"/>
</dbReference>
<dbReference type="CDD" id="cd00165">
    <property type="entry name" value="S4"/>
    <property type="match status" value="1"/>
</dbReference>
<dbReference type="Gene3D" id="3.10.290.10">
    <property type="entry name" value="RNA-binding S4 domain"/>
    <property type="match status" value="1"/>
</dbReference>
<dbReference type="HAMAP" id="MF_01306_A">
    <property type="entry name" value="Ribosomal_uS4_A"/>
    <property type="match status" value="1"/>
</dbReference>
<dbReference type="InterPro" id="IPR022801">
    <property type="entry name" value="Ribosomal_uS4"/>
</dbReference>
<dbReference type="InterPro" id="IPR022802">
    <property type="entry name" value="Ribosomal_uS4_arc"/>
</dbReference>
<dbReference type="InterPro" id="IPR018079">
    <property type="entry name" value="Ribosomal_uS4_CS"/>
</dbReference>
<dbReference type="InterPro" id="IPR005710">
    <property type="entry name" value="Ribosomal_uS4_euk/arc"/>
</dbReference>
<dbReference type="InterPro" id="IPR001912">
    <property type="entry name" value="Ribosomal_uS4_N"/>
</dbReference>
<dbReference type="InterPro" id="IPR002942">
    <property type="entry name" value="S4_RNA-bd"/>
</dbReference>
<dbReference type="InterPro" id="IPR036986">
    <property type="entry name" value="S4_RNA-bd_sf"/>
</dbReference>
<dbReference type="NCBIfam" id="NF003139">
    <property type="entry name" value="PRK04051.1"/>
    <property type="match status" value="1"/>
</dbReference>
<dbReference type="NCBIfam" id="TIGR01018">
    <property type="entry name" value="uS4_arch"/>
    <property type="match status" value="1"/>
</dbReference>
<dbReference type="PANTHER" id="PTHR11831">
    <property type="entry name" value="30S 40S RIBOSOMAL PROTEIN"/>
    <property type="match status" value="1"/>
</dbReference>
<dbReference type="PANTHER" id="PTHR11831:SF5">
    <property type="entry name" value="40S RIBOSOMAL PROTEIN S9"/>
    <property type="match status" value="1"/>
</dbReference>
<dbReference type="Pfam" id="PF01479">
    <property type="entry name" value="S4"/>
    <property type="match status" value="1"/>
</dbReference>
<dbReference type="SMART" id="SM01390">
    <property type="entry name" value="Ribosomal_S4"/>
    <property type="match status" value="1"/>
</dbReference>
<dbReference type="SMART" id="SM00363">
    <property type="entry name" value="S4"/>
    <property type="match status" value="1"/>
</dbReference>
<dbReference type="SUPFAM" id="SSF55174">
    <property type="entry name" value="Alpha-L RNA-binding motif"/>
    <property type="match status" value="1"/>
</dbReference>
<dbReference type="PROSITE" id="PS00632">
    <property type="entry name" value="RIBOSOMAL_S4"/>
    <property type="match status" value="1"/>
</dbReference>
<dbReference type="PROSITE" id="PS50889">
    <property type="entry name" value="S4"/>
    <property type="match status" value="1"/>
</dbReference>
<proteinExistence type="inferred from homology"/>
<reference key="1">
    <citation type="journal article" date="2003" name="Proc. Natl. Acad. Sci. U.S.A.">
        <title>The genome of Nanoarchaeum equitans: insights into early archaeal evolution and derived parasitism.</title>
        <authorList>
            <person name="Waters E."/>
            <person name="Hohn M.J."/>
            <person name="Ahel I."/>
            <person name="Graham D.E."/>
            <person name="Adams M.D."/>
            <person name="Barnstead M."/>
            <person name="Beeson K.Y."/>
            <person name="Bibbs L."/>
            <person name="Bolanos R."/>
            <person name="Keller M."/>
            <person name="Kretz K."/>
            <person name="Lin X."/>
            <person name="Mathur E."/>
            <person name="Ni J."/>
            <person name="Podar M."/>
            <person name="Richardson T."/>
            <person name="Sutton G.G."/>
            <person name="Simon M."/>
            <person name="Soell D."/>
            <person name="Stetter K.O."/>
            <person name="Short J.M."/>
            <person name="Noorderwier M."/>
        </authorList>
    </citation>
    <scope>NUCLEOTIDE SEQUENCE [LARGE SCALE GENOMIC DNA]</scope>
    <source>
        <strain>Kin4-M</strain>
    </source>
</reference>
<sequence>MWRQRRKWEGPSHPWQKQRLIIEKRLMKEYGLKNKRELWIAETIARKWRAYARYLNAKQAAGQDISEEKERFLTKLKKLGVLSENAELDDVLDLTVKDVLERRLQTMLVRKGLAKTMKQARQFIVHGHIMVNGEVVDAPSYLVKKEEEDKIEFVPFSPLANPEHPARKLEQKEETNEESA</sequence>
<keyword id="KW-1185">Reference proteome</keyword>
<keyword id="KW-0687">Ribonucleoprotein</keyword>
<keyword id="KW-0689">Ribosomal protein</keyword>
<keyword id="KW-0694">RNA-binding</keyword>
<keyword id="KW-0699">rRNA-binding</keyword>
<accession>Q74NF7</accession>
<name>RS4_NANEQ</name>
<feature type="chain" id="PRO_0000132513" description="Small ribosomal subunit protein uS4">
    <location>
        <begin position="1"/>
        <end position="180"/>
    </location>
</feature>
<feature type="domain" description="S4 RNA-binding" evidence="1">
    <location>
        <begin position="102"/>
        <end position="174"/>
    </location>
</feature>
<feature type="region of interest" description="Disordered" evidence="2">
    <location>
        <begin position="154"/>
        <end position="180"/>
    </location>
</feature>
<feature type="compositionally biased region" description="Basic and acidic residues" evidence="2">
    <location>
        <begin position="164"/>
        <end position="174"/>
    </location>
</feature>
<evidence type="ECO:0000255" key="1">
    <source>
        <dbReference type="HAMAP-Rule" id="MF_01306"/>
    </source>
</evidence>
<evidence type="ECO:0000256" key="2">
    <source>
        <dbReference type="SAM" id="MobiDB-lite"/>
    </source>
</evidence>
<evidence type="ECO:0000305" key="3"/>
<protein>
    <recommendedName>
        <fullName evidence="1">Small ribosomal subunit protein uS4</fullName>
    </recommendedName>
    <alternativeName>
        <fullName evidence="3">30S ribosomal protein S4</fullName>
    </alternativeName>
</protein>
<gene>
    <name evidence="1" type="primary">rps4</name>
    <name type="ordered locus">NEQ247</name>
</gene>
<comment type="function">
    <text evidence="1">One of the primary rRNA binding proteins, it binds directly to 16S rRNA where it nucleates assembly of the body of the 30S subunit.</text>
</comment>
<comment type="function">
    <text evidence="1">With S5 and S12 plays an important role in translational accuracy.</text>
</comment>
<comment type="subunit">
    <text evidence="1">Part of the 30S ribosomal subunit. Contacts protein S5. The interaction surface between S4 and S5 is involved in control of translational fidelity.</text>
</comment>
<comment type="similarity">
    <text evidence="1">Belongs to the universal ribosomal protein uS4 family.</text>
</comment>
<organism>
    <name type="scientific">Nanoarchaeum equitans (strain Kin4-M)</name>
    <dbReference type="NCBI Taxonomy" id="228908"/>
    <lineage>
        <taxon>Archaea</taxon>
        <taxon>Nanobdellota</taxon>
        <taxon>Candidatus Nanoarchaeia</taxon>
        <taxon>Nanoarchaeales</taxon>
        <taxon>Nanoarchaeaceae</taxon>
        <taxon>Nanoarchaeum</taxon>
    </lineage>
</organism>